<organism>
    <name type="scientific">Streptomyces avermitilis (strain ATCC 31267 / DSM 46492 / JCM 5070 / NBRC 14893 / NCIMB 12804 / NRRL 8165 / MA-4680)</name>
    <dbReference type="NCBI Taxonomy" id="227882"/>
    <lineage>
        <taxon>Bacteria</taxon>
        <taxon>Bacillati</taxon>
        <taxon>Actinomycetota</taxon>
        <taxon>Actinomycetes</taxon>
        <taxon>Kitasatosporales</taxon>
        <taxon>Streptomycetaceae</taxon>
        <taxon>Streptomyces</taxon>
    </lineage>
</organism>
<proteinExistence type="inferred from homology"/>
<sequence length="512" mass="54366">MLLSRLAHVSREVAATSARSRKIALLAELFRDADADDVPIVIPYLAGRLPQGRLGIGWKLLGRPVTPASEPSLTVRDVDARLTAVGAVTGTGSQAGRGRLMGELMAAATDVEQAFLRGLLTGEVRQGALDAVAVEGLAEATGAPPADVRRAVMLAGSLQTVARALLAEGPGALDGFRLTVGRPVLPMLAHTAGSVAEAVGKLGACAVEEKLDGIRVQLHRDGDHVRIYTRTLDDITDRLPELTAAALELKGDRFILDGEVIALDGNGRPRSFQEIAGRVGSRVDVAAAAASVPVSPVFFDALSVDGRDLLDLPFTERHAELARLVPEPLRVRRALVSGPDDGAAAETFLADTLARGHEGVVVKALDAPYSAGRRGASWLKVKPVHTLDLVVLAAEWGHGRRTGKLSNLHLGARAADGSFAMLGKTFKGMTDAMLTWQTERLTELAVEENGSVVTVRPELVVEIAYDGLQKSTRYPAGVTLRFARVVRYREDKTPAEADTVETLLAAHPEVTR</sequence>
<accession>Q826P6</accession>
<name>DNLI_STRAW</name>
<comment type="function">
    <text evidence="1">DNA ligase that seals nicks in double-stranded DNA during DNA replication, DNA recombination and DNA repair.</text>
</comment>
<comment type="catalytic activity">
    <reaction evidence="1">
        <text>ATP + (deoxyribonucleotide)n-3'-hydroxyl + 5'-phospho-(deoxyribonucleotide)m = (deoxyribonucleotide)n+m + AMP + diphosphate.</text>
        <dbReference type="EC" id="6.5.1.1"/>
    </reaction>
</comment>
<comment type="cofactor">
    <cofactor evidence="1">
        <name>Mg(2+)</name>
        <dbReference type="ChEBI" id="CHEBI:18420"/>
    </cofactor>
</comment>
<comment type="similarity">
    <text evidence="1">Belongs to the ATP-dependent DNA ligase family.</text>
</comment>
<dbReference type="EC" id="6.5.1.1" evidence="1"/>
<dbReference type="EMBL" id="BA000030">
    <property type="protein sequence ID" value="BAC74847.1"/>
    <property type="molecule type" value="Genomic_DNA"/>
</dbReference>
<dbReference type="RefSeq" id="WP_010988531.1">
    <property type="nucleotide sequence ID" value="NZ_JZJK01000085.1"/>
</dbReference>
<dbReference type="SMR" id="Q826P6"/>
<dbReference type="GeneID" id="41544207"/>
<dbReference type="KEGG" id="sma:SAVERM_7136"/>
<dbReference type="eggNOG" id="COG1793">
    <property type="taxonomic scope" value="Bacteria"/>
</dbReference>
<dbReference type="HOGENOM" id="CLU_005138_6_1_11"/>
<dbReference type="OrthoDB" id="3733803at2"/>
<dbReference type="Proteomes" id="UP000000428">
    <property type="component" value="Chromosome"/>
</dbReference>
<dbReference type="GO" id="GO:0005524">
    <property type="term" value="F:ATP binding"/>
    <property type="evidence" value="ECO:0007669"/>
    <property type="project" value="UniProtKB-UniRule"/>
</dbReference>
<dbReference type="GO" id="GO:0003677">
    <property type="term" value="F:DNA binding"/>
    <property type="evidence" value="ECO:0007669"/>
    <property type="project" value="InterPro"/>
</dbReference>
<dbReference type="GO" id="GO:0003910">
    <property type="term" value="F:DNA ligase (ATP) activity"/>
    <property type="evidence" value="ECO:0007669"/>
    <property type="project" value="UniProtKB-UniRule"/>
</dbReference>
<dbReference type="GO" id="GO:0046872">
    <property type="term" value="F:metal ion binding"/>
    <property type="evidence" value="ECO:0007669"/>
    <property type="project" value="UniProtKB-KW"/>
</dbReference>
<dbReference type="GO" id="GO:0051301">
    <property type="term" value="P:cell division"/>
    <property type="evidence" value="ECO:0007669"/>
    <property type="project" value="UniProtKB-KW"/>
</dbReference>
<dbReference type="GO" id="GO:0071897">
    <property type="term" value="P:DNA biosynthetic process"/>
    <property type="evidence" value="ECO:0007669"/>
    <property type="project" value="InterPro"/>
</dbReference>
<dbReference type="GO" id="GO:0006310">
    <property type="term" value="P:DNA recombination"/>
    <property type="evidence" value="ECO:0007669"/>
    <property type="project" value="UniProtKB-UniRule"/>
</dbReference>
<dbReference type="GO" id="GO:0006281">
    <property type="term" value="P:DNA repair"/>
    <property type="evidence" value="ECO:0007669"/>
    <property type="project" value="UniProtKB-UniRule"/>
</dbReference>
<dbReference type="GO" id="GO:0006260">
    <property type="term" value="P:DNA replication"/>
    <property type="evidence" value="ECO:0007669"/>
    <property type="project" value="UniProtKB-UniRule"/>
</dbReference>
<dbReference type="CDD" id="cd07901">
    <property type="entry name" value="Adenylation_DNA_ligase_Arch_LigB"/>
    <property type="match status" value="1"/>
</dbReference>
<dbReference type="CDD" id="cd07972">
    <property type="entry name" value="OBF_DNA_ligase_Arch_LigB"/>
    <property type="match status" value="1"/>
</dbReference>
<dbReference type="FunFam" id="2.40.50.140:FF:000163">
    <property type="entry name" value="Probable DNA ligase"/>
    <property type="match status" value="1"/>
</dbReference>
<dbReference type="Gene3D" id="1.10.3260.10">
    <property type="entry name" value="DNA ligase, ATP-dependent, N-terminal domain"/>
    <property type="match status" value="1"/>
</dbReference>
<dbReference type="Gene3D" id="3.30.470.30">
    <property type="entry name" value="DNA ligase/mRNA capping enzyme"/>
    <property type="match status" value="1"/>
</dbReference>
<dbReference type="Gene3D" id="2.40.50.140">
    <property type="entry name" value="Nucleic acid-binding proteins"/>
    <property type="match status" value="1"/>
</dbReference>
<dbReference type="HAMAP" id="MF_00407">
    <property type="entry name" value="DNA_ligase"/>
    <property type="match status" value="1"/>
</dbReference>
<dbReference type="InterPro" id="IPR050191">
    <property type="entry name" value="ATP-dep_DNA_ligase"/>
</dbReference>
<dbReference type="InterPro" id="IPR022865">
    <property type="entry name" value="DNA_ligae_ATP-dep_bac/arc"/>
</dbReference>
<dbReference type="InterPro" id="IPR000977">
    <property type="entry name" value="DNA_ligase_ATP-dep"/>
</dbReference>
<dbReference type="InterPro" id="IPR012309">
    <property type="entry name" value="DNA_ligase_ATP-dep_C"/>
</dbReference>
<dbReference type="InterPro" id="IPR012310">
    <property type="entry name" value="DNA_ligase_ATP-dep_cent"/>
</dbReference>
<dbReference type="InterPro" id="IPR016059">
    <property type="entry name" value="DNA_ligase_ATP-dep_CS"/>
</dbReference>
<dbReference type="InterPro" id="IPR036599">
    <property type="entry name" value="DNA_ligase_N_sf"/>
</dbReference>
<dbReference type="InterPro" id="IPR012340">
    <property type="entry name" value="NA-bd_OB-fold"/>
</dbReference>
<dbReference type="NCBIfam" id="TIGR00574">
    <property type="entry name" value="dnl1"/>
    <property type="match status" value="1"/>
</dbReference>
<dbReference type="NCBIfam" id="NF002868">
    <property type="entry name" value="PRK03180.1"/>
    <property type="match status" value="1"/>
</dbReference>
<dbReference type="PANTHER" id="PTHR45674">
    <property type="entry name" value="DNA LIGASE 1/3 FAMILY MEMBER"/>
    <property type="match status" value="1"/>
</dbReference>
<dbReference type="PANTHER" id="PTHR45674:SF13">
    <property type="entry name" value="DNA LIGASE-RELATED"/>
    <property type="match status" value="1"/>
</dbReference>
<dbReference type="Pfam" id="PF04679">
    <property type="entry name" value="DNA_ligase_A_C"/>
    <property type="match status" value="1"/>
</dbReference>
<dbReference type="Pfam" id="PF01068">
    <property type="entry name" value="DNA_ligase_A_M"/>
    <property type="match status" value="1"/>
</dbReference>
<dbReference type="SUPFAM" id="SSF117018">
    <property type="entry name" value="ATP-dependent DNA ligase DNA-binding domain"/>
    <property type="match status" value="1"/>
</dbReference>
<dbReference type="SUPFAM" id="SSF56091">
    <property type="entry name" value="DNA ligase/mRNA capping enzyme, catalytic domain"/>
    <property type="match status" value="1"/>
</dbReference>
<dbReference type="SUPFAM" id="SSF50249">
    <property type="entry name" value="Nucleic acid-binding proteins"/>
    <property type="match status" value="1"/>
</dbReference>
<dbReference type="PROSITE" id="PS00697">
    <property type="entry name" value="DNA_LIGASE_A1"/>
    <property type="match status" value="1"/>
</dbReference>
<dbReference type="PROSITE" id="PS50160">
    <property type="entry name" value="DNA_LIGASE_A3"/>
    <property type="match status" value="1"/>
</dbReference>
<protein>
    <recommendedName>
        <fullName evidence="1">Probable DNA ligase</fullName>
        <ecNumber evidence="1">6.5.1.1</ecNumber>
    </recommendedName>
    <alternativeName>
        <fullName evidence="1">Polydeoxyribonucleotide synthase [ATP]</fullName>
    </alternativeName>
</protein>
<evidence type="ECO:0000255" key="1">
    <source>
        <dbReference type="HAMAP-Rule" id="MF_00407"/>
    </source>
</evidence>
<keyword id="KW-0067">ATP-binding</keyword>
<keyword id="KW-0131">Cell cycle</keyword>
<keyword id="KW-0132">Cell division</keyword>
<keyword id="KW-0227">DNA damage</keyword>
<keyword id="KW-0233">DNA recombination</keyword>
<keyword id="KW-0234">DNA repair</keyword>
<keyword id="KW-0235">DNA replication</keyword>
<keyword id="KW-0436">Ligase</keyword>
<keyword id="KW-0460">Magnesium</keyword>
<keyword id="KW-0479">Metal-binding</keyword>
<keyword id="KW-0547">Nucleotide-binding</keyword>
<keyword id="KW-1185">Reference proteome</keyword>
<feature type="chain" id="PRO_0000365240" description="Probable DNA ligase">
    <location>
        <begin position="1"/>
        <end position="512"/>
    </location>
</feature>
<feature type="active site" description="N6-AMP-lysine intermediate" evidence="1">
    <location>
        <position position="210"/>
    </location>
</feature>
<feature type="binding site" evidence="1">
    <location>
        <position position="208"/>
    </location>
    <ligand>
        <name>ATP</name>
        <dbReference type="ChEBI" id="CHEBI:30616"/>
    </ligand>
</feature>
<feature type="binding site" evidence="1">
    <location>
        <position position="215"/>
    </location>
    <ligand>
        <name>ATP</name>
        <dbReference type="ChEBI" id="CHEBI:30616"/>
    </ligand>
</feature>
<feature type="binding site" evidence="1">
    <location>
        <position position="230"/>
    </location>
    <ligand>
        <name>ATP</name>
        <dbReference type="ChEBI" id="CHEBI:30616"/>
    </ligand>
</feature>
<feature type="binding site" evidence="1">
    <location>
        <position position="259"/>
    </location>
    <ligand>
        <name>ATP</name>
        <dbReference type="ChEBI" id="CHEBI:30616"/>
    </ligand>
</feature>
<feature type="binding site" evidence="1">
    <location>
        <position position="299"/>
    </location>
    <ligand>
        <name>ATP</name>
        <dbReference type="ChEBI" id="CHEBI:30616"/>
    </ligand>
</feature>
<feature type="binding site" evidence="1">
    <location>
        <position position="374"/>
    </location>
    <ligand>
        <name>ATP</name>
        <dbReference type="ChEBI" id="CHEBI:30616"/>
    </ligand>
</feature>
<feature type="binding site" evidence="1">
    <location>
        <position position="380"/>
    </location>
    <ligand>
        <name>ATP</name>
        <dbReference type="ChEBI" id="CHEBI:30616"/>
    </ligand>
</feature>
<reference key="1">
    <citation type="journal article" date="2001" name="Proc. Natl. Acad. Sci. U.S.A.">
        <title>Genome sequence of an industrial microorganism Streptomyces avermitilis: deducing the ability of producing secondary metabolites.</title>
        <authorList>
            <person name="Omura S."/>
            <person name="Ikeda H."/>
            <person name="Ishikawa J."/>
            <person name="Hanamoto A."/>
            <person name="Takahashi C."/>
            <person name="Shinose M."/>
            <person name="Takahashi Y."/>
            <person name="Horikawa H."/>
            <person name="Nakazawa H."/>
            <person name="Osonoe T."/>
            <person name="Kikuchi H."/>
            <person name="Shiba T."/>
            <person name="Sakaki Y."/>
            <person name="Hattori M."/>
        </authorList>
    </citation>
    <scope>NUCLEOTIDE SEQUENCE [LARGE SCALE GENOMIC DNA]</scope>
    <source>
        <strain>ATCC 31267 / DSM 46492 / JCM 5070 / NBRC 14893 / NCIMB 12804 / NRRL 8165 / MA-4680</strain>
    </source>
</reference>
<reference key="2">
    <citation type="journal article" date="2003" name="Nat. Biotechnol.">
        <title>Complete genome sequence and comparative analysis of the industrial microorganism Streptomyces avermitilis.</title>
        <authorList>
            <person name="Ikeda H."/>
            <person name="Ishikawa J."/>
            <person name="Hanamoto A."/>
            <person name="Shinose M."/>
            <person name="Kikuchi H."/>
            <person name="Shiba T."/>
            <person name="Sakaki Y."/>
            <person name="Hattori M."/>
            <person name="Omura S."/>
        </authorList>
    </citation>
    <scope>NUCLEOTIDE SEQUENCE [LARGE SCALE GENOMIC DNA]</scope>
    <source>
        <strain>ATCC 31267 / DSM 46492 / JCM 5070 / NBRC 14893 / NCIMB 12804 / NRRL 8165 / MA-4680</strain>
    </source>
</reference>
<gene>
    <name evidence="1" type="primary">lig</name>
    <name type="ordered locus">SAV_7136</name>
</gene>